<evidence type="ECO:0000250" key="1">
    <source>
        <dbReference type="UniProtKB" id="P19097"/>
    </source>
</evidence>
<evidence type="ECO:0000250" key="2">
    <source>
        <dbReference type="UniProtKB" id="Q8TGA2"/>
    </source>
</evidence>
<evidence type="ECO:0000255" key="3">
    <source>
        <dbReference type="PROSITE-ProRule" id="PRU00258"/>
    </source>
</evidence>
<evidence type="ECO:0000255" key="4">
    <source>
        <dbReference type="PROSITE-ProRule" id="PRU01348"/>
    </source>
</evidence>
<evidence type="ECO:0000256" key="5">
    <source>
        <dbReference type="SAM" id="MobiDB-lite"/>
    </source>
</evidence>
<evidence type="ECO:0000269" key="6">
    <source>
    </source>
</evidence>
<evidence type="ECO:0000303" key="7">
    <source>
    </source>
</evidence>
<evidence type="ECO:0000305" key="8"/>
<evidence type="ECO:0000305" key="9">
    <source>
    </source>
</evidence>
<comment type="function">
    <text evidence="6 9">Fatty acid synthase subunit alpha; part of the gene cluster that mediates the biosynthesis of gramillins A and B, bicyclic lipopeptides that induce cell death in maize leaves but not in wheat leaves (PubMed:30395461). The nonribosomal peptide synthetase GRA1 incorporates respectively a glutamic adic (Glu), a leucine (Leu), a serine (Ser), a hydroxyglutamine (HOGln), a 2-amino decanoic acid, and 2 cysteins (CysB and CysA) (Probable). The biosynthesis of 2-amino decanoic acid incorporated in gramillins could be initiated by a fatty acid synthase composed of the alpha and beta subunits FGSG_00036 and FGSG_11656 (Probable). The cytochrome P450 monooxygenase FGSG_15680 could hydroxylate the fatty acid chain (Probable). Subsequent oxidation to the ketone by the oxidoreductase FGSG_00048 and transamination by aminotransferase FGSG_00049 could form 2-amino-decanoic acid (Probable). On the other hand, FGSG_15680 could also be responsible for the HO-modified glutamine at the gamma-position (Probable). Whether hydroxylation occurs on the fully assembled product or on the Gln residue prior to assembly into the gramillins requires further proof (Probable). The thioredoxin FGSG_00043 could also be required for the disulfide-bond formation between CysA and CysB (Probable). The specific involvement of the remaining proteins from the cluster is more difficult to discern, but could have broader regulatory (FGSG_00040 and FGSG_11657) or enzymatic functions (FGSG_00044 and FGSG_00045) (Probable). The final C-domain of GRA1 does not possess the expected sequence of a termination CT domain, often implicated in macrocyclization and release of a cyclopeptidein fungal NRPs; and the thioesterase FGSG_00047 may act in concert with the terminal C-domain of GRA1 to catalyze the formation of the macrocyclic anhydride and release of the products (Probable).</text>
</comment>
<comment type="catalytic activity">
    <reaction evidence="9">
        <text>acetyl-CoA + n malonyl-CoA + 2n NADPH + 4n H(+) = a long-chain-acyl-CoA + n CoA + n CO2 + 2n NADP(+).</text>
        <dbReference type="EC" id="2.3.1.86"/>
    </reaction>
</comment>
<comment type="catalytic activity">
    <reaction evidence="1">
        <text>a fatty acyl-[ACP] + malonyl-[ACP] + H(+) = a 3-oxoacyl-[ACP] + holo-[ACP] + CO2</text>
        <dbReference type="Rhea" id="RHEA:22836"/>
        <dbReference type="Rhea" id="RHEA-COMP:9623"/>
        <dbReference type="Rhea" id="RHEA-COMP:9685"/>
        <dbReference type="Rhea" id="RHEA-COMP:9916"/>
        <dbReference type="Rhea" id="RHEA-COMP:14125"/>
        <dbReference type="ChEBI" id="CHEBI:15378"/>
        <dbReference type="ChEBI" id="CHEBI:16526"/>
        <dbReference type="ChEBI" id="CHEBI:64479"/>
        <dbReference type="ChEBI" id="CHEBI:78449"/>
        <dbReference type="ChEBI" id="CHEBI:78776"/>
        <dbReference type="ChEBI" id="CHEBI:138651"/>
        <dbReference type="EC" id="2.3.1.41"/>
    </reaction>
</comment>
<comment type="catalytic activity">
    <reaction evidence="1">
        <text>a (3R)-hydroxyacyl-[ACP] + NADP(+) = a 3-oxoacyl-[ACP] + NADPH + H(+)</text>
        <dbReference type="Rhea" id="RHEA:17397"/>
        <dbReference type="Rhea" id="RHEA-COMP:9916"/>
        <dbReference type="Rhea" id="RHEA-COMP:9945"/>
        <dbReference type="ChEBI" id="CHEBI:15378"/>
        <dbReference type="ChEBI" id="CHEBI:57783"/>
        <dbReference type="ChEBI" id="CHEBI:58349"/>
        <dbReference type="ChEBI" id="CHEBI:78776"/>
        <dbReference type="ChEBI" id="CHEBI:78827"/>
        <dbReference type="EC" id="1.1.1.100"/>
    </reaction>
</comment>
<comment type="pathway">
    <text evidence="9">Mycotoxin biosynthesis.</text>
</comment>
<comment type="subunit">
    <text evidence="1">Fatty acid synthase is composed of alpha and beta subunits.</text>
</comment>
<comment type="similarity">
    <text evidence="8">Belongs to the thiolase-like superfamily. Fungal fatty acid synthetase subunit alpha family.</text>
</comment>
<dbReference type="EC" id="2.3.1.86" evidence="9"/>
<dbReference type="EC" id="1.1.1.100" evidence="1"/>
<dbReference type="EC" id="2.3.1.41" evidence="1"/>
<dbReference type="EMBL" id="HG970332">
    <property type="protein sequence ID" value="CEF71863.1"/>
    <property type="molecule type" value="Genomic_DNA"/>
</dbReference>
<dbReference type="RefSeq" id="XP_011315622.1">
    <property type="nucleotide sequence ID" value="XM_011317320.1"/>
</dbReference>
<dbReference type="SMR" id="I1R9A6"/>
<dbReference type="STRING" id="229533.I1R9A6"/>
<dbReference type="GeneID" id="23547555"/>
<dbReference type="KEGG" id="fgr:FGSG_00036"/>
<dbReference type="VEuPathDB" id="FungiDB:FGRAMPH1_01G00127"/>
<dbReference type="eggNOG" id="ENOG502QQJX">
    <property type="taxonomic scope" value="Eukaryota"/>
</dbReference>
<dbReference type="HOGENOM" id="CLU_000114_0_0_1"/>
<dbReference type="InParanoid" id="I1R9A6"/>
<dbReference type="OrthoDB" id="89138at110618"/>
<dbReference type="Proteomes" id="UP000070720">
    <property type="component" value="Chromosome 1"/>
</dbReference>
<dbReference type="GO" id="GO:0005835">
    <property type="term" value="C:fatty acid synthase complex"/>
    <property type="evidence" value="ECO:0007669"/>
    <property type="project" value="InterPro"/>
</dbReference>
<dbReference type="GO" id="GO:0004316">
    <property type="term" value="F:3-oxoacyl-[acyl-carrier-protein] reductase (NADPH) activity"/>
    <property type="evidence" value="ECO:0007669"/>
    <property type="project" value="UniProtKB-EC"/>
</dbReference>
<dbReference type="GO" id="GO:0004315">
    <property type="term" value="F:3-oxoacyl-[acyl-carrier-protein] synthase activity"/>
    <property type="evidence" value="ECO:0007669"/>
    <property type="project" value="UniProtKB-EC"/>
</dbReference>
<dbReference type="GO" id="GO:0004312">
    <property type="term" value="F:fatty acid synthase activity"/>
    <property type="evidence" value="ECO:0007669"/>
    <property type="project" value="InterPro"/>
</dbReference>
<dbReference type="GO" id="GO:0004321">
    <property type="term" value="F:fatty-acyl-CoA synthase activity"/>
    <property type="evidence" value="ECO:0007669"/>
    <property type="project" value="UniProtKB-EC"/>
</dbReference>
<dbReference type="GO" id="GO:0008897">
    <property type="term" value="F:holo-[acyl-carrier-protein] synthase activity"/>
    <property type="evidence" value="ECO:0007669"/>
    <property type="project" value="InterPro"/>
</dbReference>
<dbReference type="GO" id="GO:0046872">
    <property type="term" value="F:metal ion binding"/>
    <property type="evidence" value="ECO:0007669"/>
    <property type="project" value="UniProtKB-KW"/>
</dbReference>
<dbReference type="GO" id="GO:0042759">
    <property type="term" value="P:long-chain fatty acid biosynthetic process"/>
    <property type="evidence" value="ECO:0007669"/>
    <property type="project" value="InterPro"/>
</dbReference>
<dbReference type="CDD" id="cd00828">
    <property type="entry name" value="elong_cond_enzymes"/>
    <property type="match status" value="1"/>
</dbReference>
<dbReference type="FunFam" id="3.90.25.70:FF:000001">
    <property type="entry name" value="Fatty acid synthase subunit alpha"/>
    <property type="match status" value="1"/>
</dbReference>
<dbReference type="Gene3D" id="3.30.70.2490">
    <property type="match status" value="1"/>
</dbReference>
<dbReference type="Gene3D" id="3.40.47.10">
    <property type="match status" value="1"/>
</dbReference>
<dbReference type="Gene3D" id="3.90.25.70">
    <property type="match status" value="1"/>
</dbReference>
<dbReference type="Gene3D" id="6.10.140.1410">
    <property type="match status" value="1"/>
</dbReference>
<dbReference type="Gene3D" id="3.40.50.720">
    <property type="entry name" value="NAD(P)-binding Rossmann-like Domain"/>
    <property type="match status" value="2"/>
</dbReference>
<dbReference type="InterPro" id="IPR016035">
    <property type="entry name" value="Acyl_Trfase/lysoPLipase"/>
</dbReference>
<dbReference type="InterPro" id="IPR040899">
    <property type="entry name" value="Fas_alpha_ACP"/>
</dbReference>
<dbReference type="InterPro" id="IPR047224">
    <property type="entry name" value="FAS_alpha_su_C"/>
</dbReference>
<dbReference type="InterPro" id="IPR026025">
    <property type="entry name" value="FAS_alpha_yeast"/>
</dbReference>
<dbReference type="InterPro" id="IPR041550">
    <property type="entry name" value="FASI_helical"/>
</dbReference>
<dbReference type="InterPro" id="IPR050830">
    <property type="entry name" value="Fungal_FAS"/>
</dbReference>
<dbReference type="InterPro" id="IPR018201">
    <property type="entry name" value="Ketoacyl_synth_AS"/>
</dbReference>
<dbReference type="InterPro" id="IPR014031">
    <property type="entry name" value="Ketoacyl_synth_C"/>
</dbReference>
<dbReference type="InterPro" id="IPR014030">
    <property type="entry name" value="Ketoacyl_synth_N"/>
</dbReference>
<dbReference type="InterPro" id="IPR036291">
    <property type="entry name" value="NAD(P)-bd_dom_sf"/>
</dbReference>
<dbReference type="InterPro" id="IPR020841">
    <property type="entry name" value="PKS_Beta-ketoAc_synthase_dom"/>
</dbReference>
<dbReference type="InterPro" id="IPR016039">
    <property type="entry name" value="Thiolase-like"/>
</dbReference>
<dbReference type="PANTHER" id="PTHR10982:SF21">
    <property type="entry name" value="FATTY ACID SYNTHASE SUBUNIT BETA"/>
    <property type="match status" value="1"/>
</dbReference>
<dbReference type="PANTHER" id="PTHR10982">
    <property type="entry name" value="MALONYL COA-ACYL CARRIER PROTEIN TRANSACYLASE"/>
    <property type="match status" value="1"/>
</dbReference>
<dbReference type="Pfam" id="PF18325">
    <property type="entry name" value="Fas_alpha_ACP"/>
    <property type="match status" value="1"/>
</dbReference>
<dbReference type="Pfam" id="PF18314">
    <property type="entry name" value="FAS_I_H"/>
    <property type="match status" value="1"/>
</dbReference>
<dbReference type="Pfam" id="PF00109">
    <property type="entry name" value="ketoacyl-synt"/>
    <property type="match status" value="1"/>
</dbReference>
<dbReference type="Pfam" id="PF02801">
    <property type="entry name" value="Ketoacyl-synt_C"/>
    <property type="match status" value="1"/>
</dbReference>
<dbReference type="PIRSF" id="PIRSF000454">
    <property type="entry name" value="FAS_yeast_alpha"/>
    <property type="match status" value="1"/>
</dbReference>
<dbReference type="SUPFAM" id="SSF52151">
    <property type="entry name" value="FabD/lysophospholipase-like"/>
    <property type="match status" value="1"/>
</dbReference>
<dbReference type="SUPFAM" id="SSF51735">
    <property type="entry name" value="NAD(P)-binding Rossmann-fold domains"/>
    <property type="match status" value="1"/>
</dbReference>
<dbReference type="SUPFAM" id="SSF53901">
    <property type="entry name" value="Thiolase-like"/>
    <property type="match status" value="2"/>
</dbReference>
<dbReference type="PROSITE" id="PS00606">
    <property type="entry name" value="KS3_1"/>
    <property type="match status" value="1"/>
</dbReference>
<dbReference type="PROSITE" id="PS52004">
    <property type="entry name" value="KS3_2"/>
    <property type="match status" value="1"/>
</dbReference>
<proteinExistence type="inferred from homology"/>
<reference key="1">
    <citation type="journal article" date="2007" name="Science">
        <title>The Fusarium graminearum genome reveals a link between localized polymorphism and pathogen specialization.</title>
        <authorList>
            <person name="Cuomo C.A."/>
            <person name="Gueldener U."/>
            <person name="Xu J.-R."/>
            <person name="Trail F."/>
            <person name="Turgeon B.G."/>
            <person name="Di Pietro A."/>
            <person name="Walton J.D."/>
            <person name="Ma L.-J."/>
            <person name="Baker S.E."/>
            <person name="Rep M."/>
            <person name="Adam G."/>
            <person name="Antoniw J."/>
            <person name="Baldwin T."/>
            <person name="Calvo S.E."/>
            <person name="Chang Y.-L."/>
            <person name="DeCaprio D."/>
            <person name="Gale L.R."/>
            <person name="Gnerre S."/>
            <person name="Goswami R.S."/>
            <person name="Hammond-Kosack K."/>
            <person name="Harris L.J."/>
            <person name="Hilburn K."/>
            <person name="Kennell J.C."/>
            <person name="Kroken S."/>
            <person name="Magnuson J.K."/>
            <person name="Mannhaupt G."/>
            <person name="Mauceli E.W."/>
            <person name="Mewes H.-W."/>
            <person name="Mitterbauer R."/>
            <person name="Muehlbauer G."/>
            <person name="Muensterkoetter M."/>
            <person name="Nelson D."/>
            <person name="O'Donnell K."/>
            <person name="Ouellet T."/>
            <person name="Qi W."/>
            <person name="Quesneville H."/>
            <person name="Roncero M.I.G."/>
            <person name="Seong K.-Y."/>
            <person name="Tetko I.V."/>
            <person name="Urban M."/>
            <person name="Waalwijk C."/>
            <person name="Ward T.J."/>
            <person name="Yao J."/>
            <person name="Birren B.W."/>
            <person name="Kistler H.C."/>
        </authorList>
    </citation>
    <scope>NUCLEOTIDE SEQUENCE [LARGE SCALE GENOMIC DNA]</scope>
    <source>
        <strain>ATCC MYA-4620 / CBS 123657 / FGSC 9075 / NRRL 31084 / PH-1</strain>
    </source>
</reference>
<reference key="2">
    <citation type="journal article" date="2010" name="Nature">
        <title>Comparative genomics reveals mobile pathogenicity chromosomes in Fusarium.</title>
        <authorList>
            <person name="Ma L.-J."/>
            <person name="van der Does H.C."/>
            <person name="Borkovich K.A."/>
            <person name="Coleman J.J."/>
            <person name="Daboussi M.-J."/>
            <person name="Di Pietro A."/>
            <person name="Dufresne M."/>
            <person name="Freitag M."/>
            <person name="Grabherr M."/>
            <person name="Henrissat B."/>
            <person name="Houterman P.M."/>
            <person name="Kang S."/>
            <person name="Shim W.-B."/>
            <person name="Woloshuk C."/>
            <person name="Xie X."/>
            <person name="Xu J.-R."/>
            <person name="Antoniw J."/>
            <person name="Baker S.E."/>
            <person name="Bluhm B.H."/>
            <person name="Breakspear A."/>
            <person name="Brown D.W."/>
            <person name="Butchko R.A.E."/>
            <person name="Chapman S."/>
            <person name="Coulson R."/>
            <person name="Coutinho P.M."/>
            <person name="Danchin E.G.J."/>
            <person name="Diener A."/>
            <person name="Gale L.R."/>
            <person name="Gardiner D.M."/>
            <person name="Goff S."/>
            <person name="Hammond-Kosack K.E."/>
            <person name="Hilburn K."/>
            <person name="Hua-Van A."/>
            <person name="Jonkers W."/>
            <person name="Kazan K."/>
            <person name="Kodira C.D."/>
            <person name="Koehrsen M."/>
            <person name="Kumar L."/>
            <person name="Lee Y.-H."/>
            <person name="Li L."/>
            <person name="Manners J.M."/>
            <person name="Miranda-Saavedra D."/>
            <person name="Mukherjee M."/>
            <person name="Park G."/>
            <person name="Park J."/>
            <person name="Park S.-Y."/>
            <person name="Proctor R.H."/>
            <person name="Regev A."/>
            <person name="Ruiz-Roldan M.C."/>
            <person name="Sain D."/>
            <person name="Sakthikumar S."/>
            <person name="Sykes S."/>
            <person name="Schwartz D.C."/>
            <person name="Turgeon B.G."/>
            <person name="Wapinski I."/>
            <person name="Yoder O."/>
            <person name="Young S."/>
            <person name="Zeng Q."/>
            <person name="Zhou S."/>
            <person name="Galagan J."/>
            <person name="Cuomo C.A."/>
            <person name="Kistler H.C."/>
            <person name="Rep M."/>
        </authorList>
    </citation>
    <scope>GENOME REANNOTATION</scope>
    <source>
        <strain>ATCC MYA-4620 / CBS 123657 / FGSC 9075 / NRRL 31084 / PH-1</strain>
    </source>
</reference>
<reference key="3">
    <citation type="journal article" date="2015" name="BMC Genomics">
        <title>The completed genome sequence of the pathogenic ascomycete fungus Fusarium graminearum.</title>
        <authorList>
            <person name="King R."/>
            <person name="Urban M."/>
            <person name="Hammond-Kosack M.C.U."/>
            <person name="Hassani-Pak K."/>
            <person name="Hammond-Kosack K.E."/>
        </authorList>
    </citation>
    <scope>NUCLEOTIDE SEQUENCE [LARGE SCALE GENOMIC DNA]</scope>
    <source>
        <strain>ATCC MYA-4620 / CBS 123657 / FGSC 9075 / NRRL 31084 / PH-1</strain>
    </source>
</reference>
<reference key="4">
    <citation type="journal article" date="2018" name="J. Am. Chem. Soc.">
        <title>Gramillin A and B: cyclic lipopeptides identified as the nonribosomal biosynthetic products of Fusarium graminearum.</title>
        <authorList>
            <person name="Bahadoor A."/>
            <person name="Brauer E.K."/>
            <person name="Bosnich W."/>
            <person name="Schneiderman D."/>
            <person name="Johnston A."/>
            <person name="Aubin Y."/>
            <person name="Blackwell B."/>
            <person name="Melanson J.E."/>
            <person name="Harris L.J."/>
        </authorList>
    </citation>
    <scope>FUNCTION</scope>
    <scope>PATHWAY</scope>
</reference>
<organism>
    <name type="scientific">Gibberella zeae (strain ATCC MYA-4620 / CBS 123657 / FGSC 9075 / NRRL 31084 / PH-1)</name>
    <name type="common">Wheat head blight fungus</name>
    <name type="synonym">Fusarium graminearum</name>
    <dbReference type="NCBI Taxonomy" id="229533"/>
    <lineage>
        <taxon>Eukaryota</taxon>
        <taxon>Fungi</taxon>
        <taxon>Dikarya</taxon>
        <taxon>Ascomycota</taxon>
        <taxon>Pezizomycotina</taxon>
        <taxon>Sordariomycetes</taxon>
        <taxon>Hypocreomycetidae</taxon>
        <taxon>Hypocreales</taxon>
        <taxon>Nectriaceae</taxon>
        <taxon>Fusarium</taxon>
    </lineage>
</organism>
<name>GRA9_GIBZE</name>
<sequence length="1598" mass="176732">MEAERETELSQLLLTELLSYQFANPVKWIETQDVLLKEKEINHMIEIGPSSTLTNMAKRTISKKYSEHDAALREPRLLQSFDEHAAEIYCETMQIRTQPHKSSAPQEPVPKAAPKAAPPVPVATAPLPEPGRQVSTMPINVEDVPIQSRDVIVATVAQKLRKHFLDIDCSKSIAQLCGGRSTMENELVGDLSLIFDPLPDRAEEMGISELSQIVSGSTSTTKLLTAHGKLTASIFTHKMPGGFTITDARKHLEVQWRLGVGRQNAILLRMATEVLPSRLKTREEATMLLDKIAEAYADEQGLKLQPMTEVPMSAPTTSSETKVISGCSDVELYTSNDISLPESEALVNAQKMLNIVKTENDTLQEKMDLLTTELGDDFIQGILPAWSPAKIRKYESCWNWALQDLLLLLNSILRGETSLDNSVTRSTCDMIVRRSNDRLIDVMRYMLSSNKLAGDELLVSMAKSVLAMLIEDSQNWLSCAQTSRFFGHELHNPIDAYAQGTPGSDSVEVKVKTRSQGTWKYDTSLIDLYKSSLACVREDGLRLKGKTVLLTGAGPSSIGRELLQHLLVSGALVLVATSRFSPTACRELQNLYMKWGSSGSQLVVCPFNQGSRGDCESLVQYIFSAKAKGGLGWDLDFVIPFAAVSEEGQIDELDSKSEKAHRIMLTNVLRLLGSIKQHKQAGPRNTSPVKVLLPLSPNHGVFGRDGLYAESKAGLEMLLNKWYSEDWTSYLAICGVTIGWVRGTGLMAVNDAVAAEVEVRTGVKTFSQFEMAQRLAALLVNPFAHEVEIQPVKVDISGGMADTTDLRSILSDIRREIKQDSTSTPTHQHLPSHHHVDEPEIGKPLSSVSPMANLKLNFPQLPDYEDDISPLNTLSGMVDLDRTVVITGISEVGPWGNSRTRWEMEAFGEFSLEGCIEMAWIMGLITHYNGKLGDDMGGEQYTGWVDAKTKAPVADVDVKARYEEQIIEHSGIRLVEPELDNGYDPRKKQLLHEIVLTRDLAPFAAPPELAKQFMQEHGEKVDAIPGSTENEDWTVRLRKGAVILVPKALRFDRSAAGQIPQGWDARRYGVPDWAVDQIGRETLFALVATAESLLSSGIVDPYELYQYMHVSEVGNCVGSGLGGQQALKKAFRYRYHDKPVQSDVLQEVFSNTAAAWINMLLLSSSGPIRTPVGACATAVESLELGYELITAGKAKIALVGGHDDMTEEVAYEFAKMRATVNTDEEEARGRMYSEMSRPMTTTRDGFVESQGSGIQVLASATMAIKMGLPIYGIVSWAGTASDKTGRSVPSPGKGTLTNARETHGADKNLLLDIHFRKDRITRHQQQIQADLEQDLKSLEQRFAMSRSITKSEVDKMSLFLHKEAIERNKQVLKSLGHTFWTSHTDISPIRGALSAWGLSIDDLDFVSLHGTSTVLNDKNETSVIQSQLSHLGRTRGNPAYCITQKYLTGHSKGAAGAWMINGALQALNTGLIPGNRNADDVAPELEGNDFLFFPHHSVQTNGLRAFSITSFGFGQKGAQAIIVHPRYLYAALSDAEEFHQYRRRLNVRQRRATKFFQRGLATETLFIAKEEPPYTEKQESRVLLNPEARMEGQHYKDV</sequence>
<accession>I1R9A6</accession>
<accession>A0A098CZ32</accession>
<gene>
    <name type="ORF">FG00036</name>
    <name type="ORF">FGRAMPH1_01T00127</name>
    <name type="ORF">FGSG_00036</name>
</gene>
<keyword id="KW-0275">Fatty acid biosynthesis</keyword>
<keyword id="KW-0276">Fatty acid metabolism</keyword>
<keyword id="KW-0444">Lipid biosynthesis</keyword>
<keyword id="KW-0443">Lipid metabolism</keyword>
<keyword id="KW-0460">Magnesium</keyword>
<keyword id="KW-0479">Metal-binding</keyword>
<keyword id="KW-0511">Multifunctional enzyme</keyword>
<keyword id="KW-0521">NADP</keyword>
<keyword id="KW-0560">Oxidoreductase</keyword>
<keyword id="KW-0596">Phosphopantetheine</keyword>
<keyword id="KW-0597">Phosphoprotein</keyword>
<keyword id="KW-1185">Reference proteome</keyword>
<keyword id="KW-0808">Transferase</keyword>
<feature type="chain" id="PRO_0000450561" description="Fatty acid synthase subunit alpha">
    <location>
        <begin position="1"/>
        <end position="1598"/>
    </location>
</feature>
<feature type="domain" description="Carrier" evidence="3">
    <location>
        <begin position="143"/>
        <end position="221"/>
    </location>
</feature>
<feature type="domain" description="Ketosynthase family 3 (KS3)" evidence="4">
    <location>
        <begin position="992"/>
        <end position="1524"/>
    </location>
</feature>
<feature type="region of interest" description="Disordered" evidence="5">
    <location>
        <begin position="96"/>
        <end position="134"/>
    </location>
</feature>
<feature type="region of interest" description="Ketoreductase (KR) domain" evidence="2">
    <location>
        <begin position="543"/>
        <end position="784"/>
    </location>
</feature>
<feature type="region of interest" description="Disordered" evidence="5">
    <location>
        <begin position="818"/>
        <end position="844"/>
    </location>
</feature>
<feature type="region of interest" description="Disordered" evidence="5">
    <location>
        <begin position="1280"/>
        <end position="1301"/>
    </location>
</feature>
<feature type="compositionally biased region" description="Low complexity" evidence="5">
    <location>
        <begin position="104"/>
        <end position="115"/>
    </location>
</feature>
<feature type="compositionally biased region" description="Polar residues" evidence="5">
    <location>
        <begin position="820"/>
        <end position="829"/>
    </location>
</feature>
<feature type="active site" description="For beta-ketoacyl synthase activity" evidence="4">
    <location>
        <position position="1175"/>
    </location>
</feature>
<feature type="active site" description="For beta-ketoacyl synthase activity" evidence="4">
    <location>
        <position position="1409"/>
    </location>
</feature>
<feature type="active site" description="For beta-ketoacyl synthase activity" evidence="4">
    <location>
        <position position="1450"/>
    </location>
</feature>
<feature type="modified residue" description="O-(pantetheine 4'-phosphoryl)serine" evidence="3">
    <location>
        <position position="181"/>
    </location>
</feature>
<protein>
    <recommendedName>
        <fullName evidence="7">Fatty acid synthase subunit alpha</fullName>
        <ecNumber evidence="9">2.3.1.86</ecNumber>
    </recommendedName>
    <alternativeName>
        <fullName evidence="7">Gramillins biosynthesis cluster protein FGSG_00036</fullName>
    </alternativeName>
    <domain>
        <recommendedName>
            <fullName evidence="1">3-oxoacyl-[acyl-carrier-protein] reductase</fullName>
            <ecNumber evidence="1">1.1.1.100</ecNumber>
        </recommendedName>
        <alternativeName>
            <fullName evidence="1">Beta-ketoacyl reductase</fullName>
        </alternativeName>
    </domain>
    <domain>
        <recommendedName>
            <fullName evidence="1">3-oxoacyl-[acyl-carrier-protein] synthase</fullName>
            <ecNumber evidence="1">2.3.1.41</ecNumber>
        </recommendedName>
    </domain>
</protein>